<organism>
    <name type="scientific">Bacillus mycoides (strain KBAB4)</name>
    <name type="common">Bacillus weihenstephanensis</name>
    <dbReference type="NCBI Taxonomy" id="315730"/>
    <lineage>
        <taxon>Bacteria</taxon>
        <taxon>Bacillati</taxon>
        <taxon>Bacillota</taxon>
        <taxon>Bacilli</taxon>
        <taxon>Bacillales</taxon>
        <taxon>Bacillaceae</taxon>
        <taxon>Bacillus</taxon>
        <taxon>Bacillus cereus group</taxon>
    </lineage>
</organism>
<evidence type="ECO:0000255" key="1">
    <source>
        <dbReference type="HAMAP-Rule" id="MF_00020"/>
    </source>
</evidence>
<dbReference type="EC" id="2.7.2.1" evidence="1"/>
<dbReference type="EMBL" id="CP000903">
    <property type="protein sequence ID" value="ABY45626.1"/>
    <property type="molecule type" value="Genomic_DNA"/>
</dbReference>
<dbReference type="RefSeq" id="WP_002015546.1">
    <property type="nucleotide sequence ID" value="NC_010184.1"/>
</dbReference>
<dbReference type="SMR" id="A9VKE9"/>
<dbReference type="KEGG" id="bwe:BcerKBAB4_4468"/>
<dbReference type="eggNOG" id="COG0282">
    <property type="taxonomic scope" value="Bacteria"/>
</dbReference>
<dbReference type="HOGENOM" id="CLU_020352_0_1_9"/>
<dbReference type="UniPathway" id="UPA00340">
    <property type="reaction ID" value="UER00458"/>
</dbReference>
<dbReference type="Proteomes" id="UP000002154">
    <property type="component" value="Chromosome"/>
</dbReference>
<dbReference type="GO" id="GO:0005737">
    <property type="term" value="C:cytoplasm"/>
    <property type="evidence" value="ECO:0007669"/>
    <property type="project" value="UniProtKB-SubCell"/>
</dbReference>
<dbReference type="GO" id="GO:0008776">
    <property type="term" value="F:acetate kinase activity"/>
    <property type="evidence" value="ECO:0007669"/>
    <property type="project" value="UniProtKB-UniRule"/>
</dbReference>
<dbReference type="GO" id="GO:0005524">
    <property type="term" value="F:ATP binding"/>
    <property type="evidence" value="ECO:0007669"/>
    <property type="project" value="UniProtKB-KW"/>
</dbReference>
<dbReference type="GO" id="GO:0000287">
    <property type="term" value="F:magnesium ion binding"/>
    <property type="evidence" value="ECO:0007669"/>
    <property type="project" value="UniProtKB-UniRule"/>
</dbReference>
<dbReference type="GO" id="GO:0006083">
    <property type="term" value="P:acetate metabolic process"/>
    <property type="evidence" value="ECO:0007669"/>
    <property type="project" value="TreeGrafter"/>
</dbReference>
<dbReference type="GO" id="GO:0006085">
    <property type="term" value="P:acetyl-CoA biosynthetic process"/>
    <property type="evidence" value="ECO:0007669"/>
    <property type="project" value="UniProtKB-UniRule"/>
</dbReference>
<dbReference type="CDD" id="cd24010">
    <property type="entry name" value="ASKHA_NBD_AcK_PK"/>
    <property type="match status" value="1"/>
</dbReference>
<dbReference type="Gene3D" id="3.30.420.40">
    <property type="match status" value="2"/>
</dbReference>
<dbReference type="HAMAP" id="MF_00020">
    <property type="entry name" value="Acetate_kinase"/>
    <property type="match status" value="1"/>
</dbReference>
<dbReference type="InterPro" id="IPR004372">
    <property type="entry name" value="Ac/propionate_kinase"/>
</dbReference>
<dbReference type="InterPro" id="IPR000890">
    <property type="entry name" value="Aliphatic_acid_kin_short-chain"/>
</dbReference>
<dbReference type="InterPro" id="IPR023865">
    <property type="entry name" value="Aliphatic_acid_kinase_CS"/>
</dbReference>
<dbReference type="InterPro" id="IPR043129">
    <property type="entry name" value="ATPase_NBD"/>
</dbReference>
<dbReference type="NCBIfam" id="TIGR00016">
    <property type="entry name" value="ackA"/>
    <property type="match status" value="1"/>
</dbReference>
<dbReference type="PANTHER" id="PTHR21060">
    <property type="entry name" value="ACETATE KINASE"/>
    <property type="match status" value="1"/>
</dbReference>
<dbReference type="PANTHER" id="PTHR21060:SF15">
    <property type="entry name" value="ACETATE KINASE-RELATED"/>
    <property type="match status" value="1"/>
</dbReference>
<dbReference type="Pfam" id="PF00871">
    <property type="entry name" value="Acetate_kinase"/>
    <property type="match status" value="1"/>
</dbReference>
<dbReference type="PIRSF" id="PIRSF000722">
    <property type="entry name" value="Acetate_prop_kin"/>
    <property type="match status" value="1"/>
</dbReference>
<dbReference type="PRINTS" id="PR00471">
    <property type="entry name" value="ACETATEKNASE"/>
</dbReference>
<dbReference type="SUPFAM" id="SSF53067">
    <property type="entry name" value="Actin-like ATPase domain"/>
    <property type="match status" value="2"/>
</dbReference>
<dbReference type="PROSITE" id="PS01075">
    <property type="entry name" value="ACETATE_KINASE_1"/>
    <property type="match status" value="1"/>
</dbReference>
<dbReference type="PROSITE" id="PS01076">
    <property type="entry name" value="ACETATE_KINASE_2"/>
    <property type="match status" value="1"/>
</dbReference>
<protein>
    <recommendedName>
        <fullName evidence="1">Acetate kinase</fullName>
        <ecNumber evidence="1">2.7.2.1</ecNumber>
    </recommendedName>
    <alternativeName>
        <fullName evidence="1">Acetokinase</fullName>
    </alternativeName>
</protein>
<accession>A9VKE9</accession>
<reference key="1">
    <citation type="journal article" date="2008" name="Chem. Biol. Interact.">
        <title>Extending the Bacillus cereus group genomics to putative food-borne pathogens of different toxicity.</title>
        <authorList>
            <person name="Lapidus A."/>
            <person name="Goltsman E."/>
            <person name="Auger S."/>
            <person name="Galleron N."/>
            <person name="Segurens B."/>
            <person name="Dossat C."/>
            <person name="Land M.L."/>
            <person name="Broussolle V."/>
            <person name="Brillard J."/>
            <person name="Guinebretiere M.-H."/>
            <person name="Sanchis V."/>
            <person name="Nguen-the C."/>
            <person name="Lereclus D."/>
            <person name="Richardson P."/>
            <person name="Wincker P."/>
            <person name="Weissenbach J."/>
            <person name="Ehrlich S.D."/>
            <person name="Sorokin A."/>
        </authorList>
    </citation>
    <scope>NUCLEOTIDE SEQUENCE [LARGE SCALE GENOMIC DNA]</scope>
    <source>
        <strain>KBAB4</strain>
    </source>
</reference>
<name>ACKA_BACMK</name>
<keyword id="KW-0067">ATP-binding</keyword>
<keyword id="KW-0963">Cytoplasm</keyword>
<keyword id="KW-0418">Kinase</keyword>
<keyword id="KW-0460">Magnesium</keyword>
<keyword id="KW-0479">Metal-binding</keyword>
<keyword id="KW-0547">Nucleotide-binding</keyword>
<keyword id="KW-0808">Transferase</keyword>
<gene>
    <name evidence="1" type="primary">ackA</name>
    <name type="ordered locus">BcerKBAB4_4468</name>
</gene>
<proteinExistence type="inferred from homology"/>
<comment type="function">
    <text evidence="1">Catalyzes the formation of acetyl phosphate from acetate and ATP. Can also catalyze the reverse reaction.</text>
</comment>
<comment type="catalytic activity">
    <reaction evidence="1">
        <text>acetate + ATP = acetyl phosphate + ADP</text>
        <dbReference type="Rhea" id="RHEA:11352"/>
        <dbReference type="ChEBI" id="CHEBI:22191"/>
        <dbReference type="ChEBI" id="CHEBI:30089"/>
        <dbReference type="ChEBI" id="CHEBI:30616"/>
        <dbReference type="ChEBI" id="CHEBI:456216"/>
        <dbReference type="EC" id="2.7.2.1"/>
    </reaction>
</comment>
<comment type="cofactor">
    <cofactor evidence="1">
        <name>Mg(2+)</name>
        <dbReference type="ChEBI" id="CHEBI:18420"/>
    </cofactor>
    <cofactor evidence="1">
        <name>Mn(2+)</name>
        <dbReference type="ChEBI" id="CHEBI:29035"/>
    </cofactor>
    <text evidence="1">Mg(2+). Can also accept Mn(2+).</text>
</comment>
<comment type="pathway">
    <text evidence="1">Metabolic intermediate biosynthesis; acetyl-CoA biosynthesis; acetyl-CoA from acetate: step 1/2.</text>
</comment>
<comment type="subunit">
    <text evidence="1">Homodimer.</text>
</comment>
<comment type="subcellular location">
    <subcellularLocation>
        <location evidence="1">Cytoplasm</location>
    </subcellularLocation>
</comment>
<comment type="similarity">
    <text evidence="1">Belongs to the acetokinase family.</text>
</comment>
<feature type="chain" id="PRO_1000089959" description="Acetate kinase">
    <location>
        <begin position="1"/>
        <end position="397"/>
    </location>
</feature>
<feature type="active site" description="Proton donor/acceptor" evidence="1">
    <location>
        <position position="146"/>
    </location>
</feature>
<feature type="binding site" evidence="1">
    <location>
        <position position="8"/>
    </location>
    <ligand>
        <name>Mg(2+)</name>
        <dbReference type="ChEBI" id="CHEBI:18420"/>
    </ligand>
</feature>
<feature type="binding site" evidence="1">
    <location>
        <position position="15"/>
    </location>
    <ligand>
        <name>ATP</name>
        <dbReference type="ChEBI" id="CHEBI:30616"/>
    </ligand>
</feature>
<feature type="binding site" evidence="1">
    <location>
        <position position="89"/>
    </location>
    <ligand>
        <name>substrate</name>
    </ligand>
</feature>
<feature type="binding site" evidence="1">
    <location>
        <begin position="206"/>
        <end position="210"/>
    </location>
    <ligand>
        <name>ATP</name>
        <dbReference type="ChEBI" id="CHEBI:30616"/>
    </ligand>
</feature>
<feature type="binding site" evidence="1">
    <location>
        <begin position="281"/>
        <end position="283"/>
    </location>
    <ligand>
        <name>ATP</name>
        <dbReference type="ChEBI" id="CHEBI:30616"/>
    </ligand>
</feature>
<feature type="binding site" evidence="1">
    <location>
        <begin position="329"/>
        <end position="333"/>
    </location>
    <ligand>
        <name>ATP</name>
        <dbReference type="ChEBI" id="CHEBI:30616"/>
    </ligand>
</feature>
<feature type="binding site" evidence="1">
    <location>
        <position position="382"/>
    </location>
    <ligand>
        <name>Mg(2+)</name>
        <dbReference type="ChEBI" id="CHEBI:18420"/>
    </ligand>
</feature>
<feature type="site" description="Transition state stabilizer" evidence="1">
    <location>
        <position position="178"/>
    </location>
</feature>
<feature type="site" description="Transition state stabilizer" evidence="1">
    <location>
        <position position="239"/>
    </location>
</feature>
<sequence>MSKIIAINAGSSSLKFQLFEMPSETVLTKGLVERIGLEDSIFTITVNGEKQKEITNIPDHAVAVNMLLKKLTENGIVKSLDEIGGIGHRVVHGGEKFADSVLIDAEVLADIEELSDLAPLHNPANLVGIKAFQEVLPNVPAVAVFDTAFHQTMPESAFLYSLPYEYYEKFGIRKYGFHGTSHKYVTERAAELLGRPIESLSLLSCHLGNGASIAAVEGGKSIDTSMGFTPLAGVTMGTRSGNIDPALIPYIMEKTGQTVEEVVSVLNKKSGMLGLTGYSSDLRDIIAKEEEGDHRAKVALDVFVSRIHKYIGSYTARMKGVDAIIFTAGVGENSAIIRERVLEGLEYMGVYFDVKRNNVFGEEAFISFPHSPVKIIVIPTDEEVMIARDVLRLGDIG</sequence>